<reference key="1">
    <citation type="journal article" date="2007" name="Science">
        <title>The Calyptogena magnifica chemoautotrophic symbiont genome.</title>
        <authorList>
            <person name="Newton I.L.G."/>
            <person name="Woyke T."/>
            <person name="Auchtung T.A."/>
            <person name="Dilly G.F."/>
            <person name="Dutton R.J."/>
            <person name="Fisher M.C."/>
            <person name="Fontanez K.M."/>
            <person name="Lau E."/>
            <person name="Stewart F.J."/>
            <person name="Richardson P.M."/>
            <person name="Barry K.W."/>
            <person name="Saunders E."/>
            <person name="Detter J.C."/>
            <person name="Wu D."/>
            <person name="Eisen J.A."/>
            <person name="Cavanaugh C.M."/>
        </authorList>
    </citation>
    <scope>NUCLEOTIDE SEQUENCE [LARGE SCALE GENOMIC DNA]</scope>
</reference>
<keyword id="KW-0627">Porphyrin biosynthesis</keyword>
<keyword id="KW-0808">Transferase</keyword>
<sequence>MNKTLKIATRQSPLALWQAQNVKIRLEKHHPDLTVILVEMTTKGDQILNSPLSKIGGKGLFIKELEVSMMKGITDIAVHSMKDVPYEIPQGFKLGAILKRENPFDAFVSNDFSSIDDLPQNAKVGTCSIRRIVQLKAIRPDLKILDLRGNVNTRLKKLDKGGFDGIILACAGLIRLGFESRIKQQISDQQSLPAVGQGVVGIEIRENDTEILDLIKPLIDVETTYMVSAERAMNARLEGGCSVPIAGFALIDNEQIMLTGLVGNVDTGVILKEQILSHVSQAEALGVELANKLISLGAKDILKN</sequence>
<name>HEM3_RUTMC</name>
<evidence type="ECO:0000255" key="1">
    <source>
        <dbReference type="HAMAP-Rule" id="MF_00260"/>
    </source>
</evidence>
<accession>A1AX51</accession>
<gene>
    <name evidence="1" type="primary">hemC</name>
    <name type="ordered locus">Rmag_0783</name>
</gene>
<feature type="chain" id="PRO_1000119221" description="Porphobilinogen deaminase">
    <location>
        <begin position="1"/>
        <end position="304"/>
    </location>
</feature>
<feature type="modified residue" description="S-(dipyrrolylmethanemethyl)cysteine" evidence="1">
    <location>
        <position position="241"/>
    </location>
</feature>
<protein>
    <recommendedName>
        <fullName evidence="1">Porphobilinogen deaminase</fullName>
        <shortName evidence="1">PBG</shortName>
        <ecNumber evidence="1">2.5.1.61</ecNumber>
    </recommendedName>
    <alternativeName>
        <fullName evidence="1">Hydroxymethylbilane synthase</fullName>
        <shortName evidence="1">HMBS</shortName>
    </alternativeName>
    <alternativeName>
        <fullName evidence="1">Pre-uroporphyrinogen synthase</fullName>
    </alternativeName>
</protein>
<dbReference type="EC" id="2.5.1.61" evidence="1"/>
<dbReference type="EMBL" id="CP000488">
    <property type="protein sequence ID" value="ABL02508.1"/>
    <property type="molecule type" value="Genomic_DNA"/>
</dbReference>
<dbReference type="RefSeq" id="WP_011738133.1">
    <property type="nucleotide sequence ID" value="NC_008610.1"/>
</dbReference>
<dbReference type="SMR" id="A1AX51"/>
<dbReference type="STRING" id="413404.Rmag_0783"/>
<dbReference type="KEGG" id="rma:Rmag_0783"/>
<dbReference type="eggNOG" id="COG0181">
    <property type="taxonomic scope" value="Bacteria"/>
</dbReference>
<dbReference type="HOGENOM" id="CLU_019704_0_2_6"/>
<dbReference type="OrthoDB" id="9810298at2"/>
<dbReference type="UniPathway" id="UPA00251">
    <property type="reaction ID" value="UER00319"/>
</dbReference>
<dbReference type="Proteomes" id="UP000002587">
    <property type="component" value="Chromosome"/>
</dbReference>
<dbReference type="GO" id="GO:0005737">
    <property type="term" value="C:cytoplasm"/>
    <property type="evidence" value="ECO:0007669"/>
    <property type="project" value="TreeGrafter"/>
</dbReference>
<dbReference type="GO" id="GO:0004418">
    <property type="term" value="F:hydroxymethylbilane synthase activity"/>
    <property type="evidence" value="ECO:0007669"/>
    <property type="project" value="UniProtKB-UniRule"/>
</dbReference>
<dbReference type="GO" id="GO:0006782">
    <property type="term" value="P:protoporphyrinogen IX biosynthetic process"/>
    <property type="evidence" value="ECO:0007669"/>
    <property type="project" value="UniProtKB-UniRule"/>
</dbReference>
<dbReference type="CDD" id="cd13646">
    <property type="entry name" value="PBP2_EcHMBS_like"/>
    <property type="match status" value="1"/>
</dbReference>
<dbReference type="FunFam" id="3.40.190.10:FF:000004">
    <property type="entry name" value="Porphobilinogen deaminase"/>
    <property type="match status" value="1"/>
</dbReference>
<dbReference type="FunFam" id="3.40.190.10:FF:000005">
    <property type="entry name" value="Porphobilinogen deaminase"/>
    <property type="match status" value="1"/>
</dbReference>
<dbReference type="Gene3D" id="3.40.190.10">
    <property type="entry name" value="Periplasmic binding protein-like II"/>
    <property type="match status" value="2"/>
</dbReference>
<dbReference type="Gene3D" id="3.30.160.40">
    <property type="entry name" value="Porphobilinogen deaminase, C-terminal domain"/>
    <property type="match status" value="1"/>
</dbReference>
<dbReference type="HAMAP" id="MF_00260">
    <property type="entry name" value="Porphobil_deam"/>
    <property type="match status" value="1"/>
</dbReference>
<dbReference type="InterPro" id="IPR000860">
    <property type="entry name" value="HemC"/>
</dbReference>
<dbReference type="InterPro" id="IPR022419">
    <property type="entry name" value="Porphobilin_deaminase_cofac_BS"/>
</dbReference>
<dbReference type="InterPro" id="IPR022417">
    <property type="entry name" value="Porphobilin_deaminase_N"/>
</dbReference>
<dbReference type="InterPro" id="IPR022418">
    <property type="entry name" value="Porphobilinogen_deaminase_C"/>
</dbReference>
<dbReference type="InterPro" id="IPR036803">
    <property type="entry name" value="Porphobilinogen_deaminase_C_sf"/>
</dbReference>
<dbReference type="NCBIfam" id="TIGR00212">
    <property type="entry name" value="hemC"/>
    <property type="match status" value="1"/>
</dbReference>
<dbReference type="PANTHER" id="PTHR11557">
    <property type="entry name" value="PORPHOBILINOGEN DEAMINASE"/>
    <property type="match status" value="1"/>
</dbReference>
<dbReference type="PANTHER" id="PTHR11557:SF0">
    <property type="entry name" value="PORPHOBILINOGEN DEAMINASE"/>
    <property type="match status" value="1"/>
</dbReference>
<dbReference type="Pfam" id="PF01379">
    <property type="entry name" value="Porphobil_deam"/>
    <property type="match status" value="1"/>
</dbReference>
<dbReference type="Pfam" id="PF03900">
    <property type="entry name" value="Porphobil_deamC"/>
    <property type="match status" value="1"/>
</dbReference>
<dbReference type="PIRSF" id="PIRSF001438">
    <property type="entry name" value="4pyrrol_synth_OHMeBilane_synth"/>
    <property type="match status" value="1"/>
</dbReference>
<dbReference type="PRINTS" id="PR00151">
    <property type="entry name" value="PORPHBDMNASE"/>
</dbReference>
<dbReference type="SUPFAM" id="SSF53850">
    <property type="entry name" value="Periplasmic binding protein-like II"/>
    <property type="match status" value="1"/>
</dbReference>
<dbReference type="SUPFAM" id="SSF54782">
    <property type="entry name" value="Porphobilinogen deaminase (hydroxymethylbilane synthase), C-terminal domain"/>
    <property type="match status" value="1"/>
</dbReference>
<dbReference type="PROSITE" id="PS00533">
    <property type="entry name" value="PORPHOBILINOGEN_DEAM"/>
    <property type="match status" value="1"/>
</dbReference>
<proteinExistence type="inferred from homology"/>
<organism>
    <name type="scientific">Ruthia magnifica subsp. Calyptogena magnifica</name>
    <dbReference type="NCBI Taxonomy" id="413404"/>
    <lineage>
        <taxon>Bacteria</taxon>
        <taxon>Pseudomonadati</taxon>
        <taxon>Pseudomonadota</taxon>
        <taxon>Gammaproteobacteria</taxon>
        <taxon>Candidatus Pseudothioglobaceae</taxon>
        <taxon>Candidatus Ruthturnera</taxon>
    </lineage>
</organism>
<comment type="function">
    <text evidence="1">Tetrapolymerization of the monopyrrole PBG into the hydroxymethylbilane pre-uroporphyrinogen in several discrete steps.</text>
</comment>
<comment type="catalytic activity">
    <reaction evidence="1">
        <text>4 porphobilinogen + H2O = hydroxymethylbilane + 4 NH4(+)</text>
        <dbReference type="Rhea" id="RHEA:13185"/>
        <dbReference type="ChEBI" id="CHEBI:15377"/>
        <dbReference type="ChEBI" id="CHEBI:28938"/>
        <dbReference type="ChEBI" id="CHEBI:57845"/>
        <dbReference type="ChEBI" id="CHEBI:58126"/>
        <dbReference type="EC" id="2.5.1.61"/>
    </reaction>
</comment>
<comment type="cofactor">
    <cofactor evidence="1">
        <name>dipyrromethane</name>
        <dbReference type="ChEBI" id="CHEBI:60342"/>
    </cofactor>
    <text evidence="1">Binds 1 dipyrromethane group covalently.</text>
</comment>
<comment type="pathway">
    <text evidence="1">Porphyrin-containing compound metabolism; protoporphyrin-IX biosynthesis; coproporphyrinogen-III from 5-aminolevulinate: step 2/4.</text>
</comment>
<comment type="subunit">
    <text evidence="1">Monomer.</text>
</comment>
<comment type="miscellaneous">
    <text evidence="1">The porphobilinogen subunits are added to the dipyrromethane group.</text>
</comment>
<comment type="similarity">
    <text evidence="1">Belongs to the HMBS family.</text>
</comment>